<organism>
    <name type="scientific">Mus musculus</name>
    <name type="common">Mouse</name>
    <dbReference type="NCBI Taxonomy" id="10090"/>
    <lineage>
        <taxon>Eukaryota</taxon>
        <taxon>Metazoa</taxon>
        <taxon>Chordata</taxon>
        <taxon>Craniata</taxon>
        <taxon>Vertebrata</taxon>
        <taxon>Euteleostomi</taxon>
        <taxon>Mammalia</taxon>
        <taxon>Eutheria</taxon>
        <taxon>Euarchontoglires</taxon>
        <taxon>Glires</taxon>
        <taxon>Rodentia</taxon>
        <taxon>Myomorpha</taxon>
        <taxon>Muroidea</taxon>
        <taxon>Muridae</taxon>
        <taxon>Murinae</taxon>
        <taxon>Mus</taxon>
        <taxon>Mus</taxon>
    </lineage>
</organism>
<sequence length="941" mass="105947">MDRSSKRRQVKPLAASLLEALDYDSSDDSDFKVGDASDSEGSGNGSEDPSKDSGEGSCSDSEENILEEELNEDIQVKEEQLKNSTEEIMPSDKQLIKMEKKEEEENGERPRKKKEKEKEKEKEREKDKEKATVSDSAAASAAGTTPATSPPAVTSPSVPTTTTTTTEEQVSEPKKWNLRRNRPLLDFVSMEELNAMDDYDSEDDNDWRPTVVKRKGRSASQKEGSDGDNEDDDDEGSGSEEDENDEGNDEDHSSPASEAGGKKKRSKVLSRNSADDEELTNDSLTLSQSKSNEDSLILEKSQNWSSQKMDHILICCVCLGDNSEDADEIIQCDNCGITVHEGCYGVDGESDSIMSSASENSTEPWFCDACKCGVSPSCELCPNQDGIFKETDAGRWVHIVCALYVPGVAFGDIDKLRPVTLTEMNYSKYGAKECSFCEDPRFARTGVCISCDAGMCRAYFHVTCAQKEGLLSEAAAEEDIADPFFAYCKQHADRLDRKWKRKNYLALQSYCKMSLQEREKQLSPEAQARINARLQQYRAKAELARSTRPQAWVPREKLPRPLTSSASAIRKLMRKAELMGISTDIFPVDNSDTSSSVDGRRKHKQPALTADFVNYYFERNMRMIQIQENMAEQKNIKDKLENEQEKLHVEYNKLCESLEELQNLNGKLRSEGQGIWALLGRITGQKLNVPAILRAPKERKPSKKEGGTQKTSALPTVLYSCGICKKNHDQHLLLLCDTCKLHYHLGCLDPPLTRMPRKTKNSYWQCSECDQAGSSDMEAEMAMETLPDGTKRSRRQIKEPVKFVPQDVPPEPKKIPIRNTRTRGRKRSFVPEEEKHEERVPRERRQRQSVLQKKPKAEDLRTECSTCKGTGDNENLVRCDECRLCYHFGCLDPPLKKSPKQTGYGWICQECDSSSSKEDENEAEKKNASQELSMEQKTPKK</sequence>
<protein>
    <recommendedName>
        <fullName>PHD finger protein 14</fullName>
    </recommendedName>
</protein>
<name>PHF14_MOUSE</name>
<feature type="chain" id="PRO_0000059307" description="PHD finger protein 14">
    <location>
        <begin position="1"/>
        <end position="941"/>
    </location>
</feature>
<feature type="zinc finger region" description="PHD-type 1" evidence="4">
    <location>
        <begin position="312"/>
        <end position="373"/>
    </location>
</feature>
<feature type="zinc finger region" description="C2HC pre-PHD-type" evidence="5">
    <location>
        <begin position="375"/>
        <end position="408"/>
    </location>
</feature>
<feature type="zinc finger region" description="PHD-type 2" evidence="5">
    <location>
        <begin position="432"/>
        <end position="492"/>
    </location>
</feature>
<feature type="zinc finger region" description="PHD-type 3" evidence="4">
    <location>
        <begin position="718"/>
        <end position="772"/>
    </location>
</feature>
<feature type="zinc finger region" description="PHD-type 4" evidence="4">
    <location>
        <begin position="861"/>
        <end position="914"/>
    </location>
</feature>
<feature type="region of interest" description="Disordered" evidence="6">
    <location>
        <begin position="22"/>
        <end position="295"/>
    </location>
</feature>
<feature type="region of interest" description="Disordered" evidence="6">
    <location>
        <begin position="804"/>
        <end position="855"/>
    </location>
</feature>
<feature type="region of interest" description="Disordered" evidence="6">
    <location>
        <begin position="912"/>
        <end position="941"/>
    </location>
</feature>
<feature type="coiled-coil region" evidence="3">
    <location>
        <begin position="623"/>
        <end position="671"/>
    </location>
</feature>
<feature type="compositionally biased region" description="Low complexity" evidence="6">
    <location>
        <begin position="36"/>
        <end position="47"/>
    </location>
</feature>
<feature type="compositionally biased region" description="Acidic residues" evidence="6">
    <location>
        <begin position="60"/>
        <end position="72"/>
    </location>
</feature>
<feature type="compositionally biased region" description="Basic and acidic residues" evidence="6">
    <location>
        <begin position="74"/>
        <end position="85"/>
    </location>
</feature>
<feature type="compositionally biased region" description="Basic and acidic residues" evidence="6">
    <location>
        <begin position="94"/>
        <end position="109"/>
    </location>
</feature>
<feature type="compositionally biased region" description="Basic and acidic residues" evidence="6">
    <location>
        <begin position="116"/>
        <end position="132"/>
    </location>
</feature>
<feature type="compositionally biased region" description="Low complexity" evidence="6">
    <location>
        <begin position="133"/>
        <end position="166"/>
    </location>
</feature>
<feature type="compositionally biased region" description="Acidic residues" evidence="6">
    <location>
        <begin position="194"/>
        <end position="205"/>
    </location>
</feature>
<feature type="compositionally biased region" description="Acidic residues" evidence="6">
    <location>
        <begin position="226"/>
        <end position="249"/>
    </location>
</feature>
<feature type="compositionally biased region" description="Polar residues" evidence="6">
    <location>
        <begin position="281"/>
        <end position="290"/>
    </location>
</feature>
<feature type="compositionally biased region" description="Basic and acidic residues" evidence="6">
    <location>
        <begin position="829"/>
        <end position="843"/>
    </location>
</feature>
<feature type="compositionally biased region" description="Basic and acidic residues" evidence="6">
    <location>
        <begin position="915"/>
        <end position="928"/>
    </location>
</feature>
<feature type="compositionally biased region" description="Polar residues" evidence="6">
    <location>
        <begin position="930"/>
        <end position="941"/>
    </location>
</feature>
<feature type="binding site" evidence="4">
    <location>
        <position position="315"/>
    </location>
    <ligand>
        <name>Zn(2+)</name>
        <dbReference type="ChEBI" id="CHEBI:29105"/>
        <label>1</label>
    </ligand>
</feature>
<feature type="binding site" evidence="4">
    <location>
        <position position="318"/>
    </location>
    <ligand>
        <name>Zn(2+)</name>
        <dbReference type="ChEBI" id="CHEBI:29105"/>
        <label>1</label>
    </ligand>
</feature>
<feature type="binding site" evidence="4">
    <location>
        <position position="332"/>
    </location>
    <ligand>
        <name>Zn(2+)</name>
        <dbReference type="ChEBI" id="CHEBI:29105"/>
        <label>2</label>
    </ligand>
</feature>
<feature type="binding site" evidence="4">
    <location>
        <position position="335"/>
    </location>
    <ligand>
        <name>Zn(2+)</name>
        <dbReference type="ChEBI" id="CHEBI:29105"/>
        <label>2</label>
    </ligand>
</feature>
<feature type="binding site" evidence="4">
    <location>
        <position position="340"/>
    </location>
    <ligand>
        <name>Zn(2+)</name>
        <dbReference type="ChEBI" id="CHEBI:29105"/>
        <label>1</label>
    </ligand>
</feature>
<feature type="binding site" evidence="4">
    <location>
        <position position="343"/>
    </location>
    <ligand>
        <name>Zn(2+)</name>
        <dbReference type="ChEBI" id="CHEBI:29105"/>
        <label>1</label>
    </ligand>
</feature>
<feature type="binding site" evidence="4">
    <location>
        <position position="367"/>
    </location>
    <ligand>
        <name>Zn(2+)</name>
        <dbReference type="ChEBI" id="CHEBI:29105"/>
        <label>2</label>
    </ligand>
</feature>
<feature type="binding site" evidence="4">
    <location>
        <position position="370"/>
    </location>
    <ligand>
        <name>Zn(2+)</name>
        <dbReference type="ChEBI" id="CHEBI:29105"/>
        <label>2</label>
    </ligand>
</feature>
<feature type="binding site" evidence="1">
    <location>
        <position position="378"/>
    </location>
    <ligand>
        <name>Zn(2+)</name>
        <dbReference type="ChEBI" id="CHEBI:29105"/>
        <label>3</label>
    </ligand>
</feature>
<feature type="binding site" evidence="1">
    <location>
        <position position="381"/>
    </location>
    <ligand>
        <name>Zn(2+)</name>
        <dbReference type="ChEBI" id="CHEBI:29105"/>
        <label>3</label>
    </ligand>
</feature>
<feature type="binding site" evidence="1">
    <location>
        <position position="398"/>
    </location>
    <ligand>
        <name>Zn(2+)</name>
        <dbReference type="ChEBI" id="CHEBI:29105"/>
        <label>3</label>
    </ligand>
</feature>
<feature type="binding site" evidence="1">
    <location>
        <position position="401"/>
    </location>
    <ligand>
        <name>Zn(2+)</name>
        <dbReference type="ChEBI" id="CHEBI:29105"/>
        <label>3</label>
    </ligand>
</feature>
<feature type="binding site" evidence="1">
    <location>
        <position position="434"/>
    </location>
    <ligand>
        <name>Zn(2+)</name>
        <dbReference type="ChEBI" id="CHEBI:29105"/>
        <label>4</label>
    </ligand>
</feature>
<feature type="binding site" evidence="1">
    <location>
        <position position="437"/>
    </location>
    <ligand>
        <name>Zn(2+)</name>
        <dbReference type="ChEBI" id="CHEBI:29105"/>
        <label>4</label>
    </ligand>
</feature>
<feature type="binding site" evidence="1">
    <location>
        <position position="451"/>
    </location>
    <ligand>
        <name>Zn(2+)</name>
        <dbReference type="ChEBI" id="CHEBI:29105"/>
        <label>5</label>
    </ligand>
</feature>
<feature type="binding site" evidence="1">
    <location>
        <position position="456"/>
    </location>
    <ligand>
        <name>Zn(2+)</name>
        <dbReference type="ChEBI" id="CHEBI:29105"/>
        <label>5</label>
    </ligand>
</feature>
<feature type="binding site" evidence="1">
    <location>
        <position position="461"/>
    </location>
    <ligand>
        <name>Zn(2+)</name>
        <dbReference type="ChEBI" id="CHEBI:29105"/>
        <label>4</label>
    </ligand>
</feature>
<feature type="binding site" evidence="1">
    <location>
        <position position="464"/>
    </location>
    <ligand>
        <name>Zn(2+)</name>
        <dbReference type="ChEBI" id="CHEBI:29105"/>
        <label>4</label>
    </ligand>
</feature>
<feature type="binding site" evidence="1">
    <location>
        <position position="488"/>
    </location>
    <ligand>
        <name>Zn(2+)</name>
        <dbReference type="ChEBI" id="CHEBI:29105"/>
        <label>5</label>
    </ligand>
</feature>
<feature type="binding site" evidence="1">
    <location>
        <position position="491"/>
    </location>
    <ligand>
        <name>Zn(2+)</name>
        <dbReference type="ChEBI" id="CHEBI:29105"/>
        <label>5</label>
    </ligand>
</feature>
<feature type="binding site" evidence="4">
    <location>
        <position position="721"/>
    </location>
    <ligand>
        <name>Zn(2+)</name>
        <dbReference type="ChEBI" id="CHEBI:29105"/>
        <label>6</label>
    </ligand>
</feature>
<feature type="binding site" evidence="4">
    <location>
        <position position="724"/>
    </location>
    <ligand>
        <name>Zn(2+)</name>
        <dbReference type="ChEBI" id="CHEBI:29105"/>
        <label>6</label>
    </ligand>
</feature>
<feature type="binding site" evidence="4">
    <location>
        <position position="736"/>
    </location>
    <ligand>
        <name>Zn(2+)</name>
        <dbReference type="ChEBI" id="CHEBI:29105"/>
        <label>7</label>
    </ligand>
</feature>
<feature type="binding site" evidence="4">
    <location>
        <position position="739"/>
    </location>
    <ligand>
        <name>Zn(2+)</name>
        <dbReference type="ChEBI" id="CHEBI:29105"/>
        <label>7</label>
    </ligand>
</feature>
<feature type="binding site" evidence="4">
    <location>
        <position position="744"/>
    </location>
    <ligand>
        <name>Zn(2+)</name>
        <dbReference type="ChEBI" id="CHEBI:29105"/>
        <label>6</label>
    </ligand>
</feature>
<feature type="binding site" evidence="4">
    <location>
        <position position="747"/>
    </location>
    <ligand>
        <name>Zn(2+)</name>
        <dbReference type="ChEBI" id="CHEBI:29105"/>
        <label>6</label>
    </ligand>
</feature>
<feature type="binding site" evidence="4">
    <location>
        <position position="766"/>
    </location>
    <ligand>
        <name>Zn(2+)</name>
        <dbReference type="ChEBI" id="CHEBI:29105"/>
        <label>7</label>
    </ligand>
</feature>
<feature type="binding site" evidence="4">
    <location>
        <position position="769"/>
    </location>
    <ligand>
        <name>Zn(2+)</name>
        <dbReference type="ChEBI" id="CHEBI:29105"/>
        <label>7</label>
    </ligand>
</feature>
<feature type="binding site" evidence="4">
    <location>
        <position position="864"/>
    </location>
    <ligand>
        <name>Zn(2+)</name>
        <dbReference type="ChEBI" id="CHEBI:29105"/>
        <label>8</label>
    </ligand>
</feature>
<feature type="binding site" evidence="4">
    <location>
        <position position="867"/>
    </location>
    <ligand>
        <name>Zn(2+)</name>
        <dbReference type="ChEBI" id="CHEBI:29105"/>
        <label>8</label>
    </ligand>
</feature>
<feature type="binding site" evidence="4">
    <location>
        <position position="879"/>
    </location>
    <ligand>
        <name>Zn(2+)</name>
        <dbReference type="ChEBI" id="CHEBI:29105"/>
        <label>9</label>
    </ligand>
</feature>
<feature type="binding site" evidence="4">
    <location>
        <position position="882"/>
    </location>
    <ligand>
        <name>Zn(2+)</name>
        <dbReference type="ChEBI" id="CHEBI:29105"/>
        <label>9</label>
    </ligand>
</feature>
<feature type="binding site" evidence="4">
    <location>
        <position position="887"/>
    </location>
    <ligand>
        <name>Zn(2+)</name>
        <dbReference type="ChEBI" id="CHEBI:29105"/>
        <label>8</label>
    </ligand>
</feature>
<feature type="binding site" evidence="4">
    <location>
        <position position="890"/>
    </location>
    <ligand>
        <name>Zn(2+)</name>
        <dbReference type="ChEBI" id="CHEBI:29105"/>
        <label>8</label>
    </ligand>
</feature>
<feature type="binding site" evidence="4">
    <location>
        <position position="908"/>
    </location>
    <ligand>
        <name>Zn(2+)</name>
        <dbReference type="ChEBI" id="CHEBI:29105"/>
        <label>9</label>
    </ligand>
</feature>
<feature type="binding site" evidence="4">
    <location>
        <position position="911"/>
    </location>
    <ligand>
        <name>Zn(2+)</name>
        <dbReference type="ChEBI" id="CHEBI:29105"/>
        <label>9</label>
    </ligand>
</feature>
<feature type="modified residue" description="Phosphoserine" evidence="2">
    <location>
        <position position="26"/>
    </location>
</feature>
<feature type="modified residue" description="Phosphoserine" evidence="2">
    <location>
        <position position="29"/>
    </location>
</feature>
<feature type="modified residue" description="Phosphoserine" evidence="2">
    <location>
        <position position="84"/>
    </location>
</feature>
<feature type="modified residue" description="Phosphoserine" evidence="2">
    <location>
        <position position="189"/>
    </location>
</feature>
<feature type="modified residue" description="Phosphotyrosine" evidence="2">
    <location>
        <position position="199"/>
    </location>
</feature>
<feature type="modified residue" description="Phosphoserine" evidence="2">
    <location>
        <position position="201"/>
    </location>
</feature>
<feature type="modified residue" description="Phosphothreonine" evidence="11 12 13">
    <location>
        <position position="280"/>
    </location>
</feature>
<feature type="modified residue" description="Phosphoserine" evidence="11 12 13">
    <location>
        <position position="283"/>
    </location>
</feature>
<feature type="modified residue" description="Phosphoserine" evidence="2">
    <location>
        <position position="287"/>
    </location>
</feature>
<feature type="modified residue" description="Phosphoserine" evidence="2">
    <location>
        <position position="291"/>
    </location>
</feature>
<feature type="modified residue" description="Phosphoserine" evidence="2">
    <location>
        <position position="295"/>
    </location>
</feature>
<feature type="modified residue" description="Phosphoserine" evidence="2">
    <location>
        <position position="301"/>
    </location>
</feature>
<feature type="modified residue" description="Phosphoserine" evidence="2">
    <location>
        <position position="352"/>
    </location>
</feature>
<feature type="modified residue" description="Phosphoserine" evidence="2">
    <location>
        <position position="523"/>
    </location>
</feature>
<feature type="modified residue" description="Phosphoserine" evidence="13">
    <location>
        <position position="774"/>
    </location>
</feature>
<feature type="modified residue" description="Phosphoserine" evidence="13">
    <location>
        <position position="775"/>
    </location>
</feature>
<feature type="modified residue" description="Phosphoserine" evidence="2">
    <location>
        <position position="828"/>
    </location>
</feature>
<feature type="splice variant" id="VSP_061648" description="In isoform 3.">
    <location>
        <begin position="879"/>
        <end position="941"/>
    </location>
</feature>
<feature type="splice variant" id="VSP_061649" description="In isoform 2.">
    <original>CDE</original>
    <variation>NLT</variation>
    <location>
        <begin position="879"/>
        <end position="881"/>
    </location>
</feature>
<feature type="splice variant" id="VSP_061650" description="In isoform 2.">
    <location>
        <begin position="882"/>
        <end position="941"/>
    </location>
</feature>
<feature type="sequence conflict" description="In Ref. 2; AAH40236." evidence="10" ref="2">
    <original>V</original>
    <variation>I</variation>
    <location>
        <position position="133"/>
    </location>
</feature>
<proteinExistence type="evidence at protein level"/>
<reference key="1">
    <citation type="journal article" date="2005" name="Science">
        <title>The transcriptional landscape of the mammalian genome.</title>
        <authorList>
            <person name="Carninci P."/>
            <person name="Kasukawa T."/>
            <person name="Katayama S."/>
            <person name="Gough J."/>
            <person name="Frith M.C."/>
            <person name="Maeda N."/>
            <person name="Oyama R."/>
            <person name="Ravasi T."/>
            <person name="Lenhard B."/>
            <person name="Wells C."/>
            <person name="Kodzius R."/>
            <person name="Shimokawa K."/>
            <person name="Bajic V.B."/>
            <person name="Brenner S.E."/>
            <person name="Batalov S."/>
            <person name="Forrest A.R."/>
            <person name="Zavolan M."/>
            <person name="Davis M.J."/>
            <person name="Wilming L.G."/>
            <person name="Aidinis V."/>
            <person name="Allen J.E."/>
            <person name="Ambesi-Impiombato A."/>
            <person name="Apweiler R."/>
            <person name="Aturaliya R.N."/>
            <person name="Bailey T.L."/>
            <person name="Bansal M."/>
            <person name="Baxter L."/>
            <person name="Beisel K.W."/>
            <person name="Bersano T."/>
            <person name="Bono H."/>
            <person name="Chalk A.M."/>
            <person name="Chiu K.P."/>
            <person name="Choudhary V."/>
            <person name="Christoffels A."/>
            <person name="Clutterbuck D.R."/>
            <person name="Crowe M.L."/>
            <person name="Dalla E."/>
            <person name="Dalrymple B.P."/>
            <person name="de Bono B."/>
            <person name="Della Gatta G."/>
            <person name="di Bernardo D."/>
            <person name="Down T."/>
            <person name="Engstrom P."/>
            <person name="Fagiolini M."/>
            <person name="Faulkner G."/>
            <person name="Fletcher C.F."/>
            <person name="Fukushima T."/>
            <person name="Furuno M."/>
            <person name="Futaki S."/>
            <person name="Gariboldi M."/>
            <person name="Georgii-Hemming P."/>
            <person name="Gingeras T.R."/>
            <person name="Gojobori T."/>
            <person name="Green R.E."/>
            <person name="Gustincich S."/>
            <person name="Harbers M."/>
            <person name="Hayashi Y."/>
            <person name="Hensch T.K."/>
            <person name="Hirokawa N."/>
            <person name="Hill D."/>
            <person name="Huminiecki L."/>
            <person name="Iacono M."/>
            <person name="Ikeo K."/>
            <person name="Iwama A."/>
            <person name="Ishikawa T."/>
            <person name="Jakt M."/>
            <person name="Kanapin A."/>
            <person name="Katoh M."/>
            <person name="Kawasawa Y."/>
            <person name="Kelso J."/>
            <person name="Kitamura H."/>
            <person name="Kitano H."/>
            <person name="Kollias G."/>
            <person name="Krishnan S.P."/>
            <person name="Kruger A."/>
            <person name="Kummerfeld S.K."/>
            <person name="Kurochkin I.V."/>
            <person name="Lareau L.F."/>
            <person name="Lazarevic D."/>
            <person name="Lipovich L."/>
            <person name="Liu J."/>
            <person name="Liuni S."/>
            <person name="McWilliam S."/>
            <person name="Madan Babu M."/>
            <person name="Madera M."/>
            <person name="Marchionni L."/>
            <person name="Matsuda H."/>
            <person name="Matsuzawa S."/>
            <person name="Miki H."/>
            <person name="Mignone F."/>
            <person name="Miyake S."/>
            <person name="Morris K."/>
            <person name="Mottagui-Tabar S."/>
            <person name="Mulder N."/>
            <person name="Nakano N."/>
            <person name="Nakauchi H."/>
            <person name="Ng P."/>
            <person name="Nilsson R."/>
            <person name="Nishiguchi S."/>
            <person name="Nishikawa S."/>
            <person name="Nori F."/>
            <person name="Ohara O."/>
            <person name="Okazaki Y."/>
            <person name="Orlando V."/>
            <person name="Pang K.C."/>
            <person name="Pavan W.J."/>
            <person name="Pavesi G."/>
            <person name="Pesole G."/>
            <person name="Petrovsky N."/>
            <person name="Piazza S."/>
            <person name="Reed J."/>
            <person name="Reid J.F."/>
            <person name="Ring B.Z."/>
            <person name="Ringwald M."/>
            <person name="Rost B."/>
            <person name="Ruan Y."/>
            <person name="Salzberg S.L."/>
            <person name="Sandelin A."/>
            <person name="Schneider C."/>
            <person name="Schoenbach C."/>
            <person name="Sekiguchi K."/>
            <person name="Semple C.A."/>
            <person name="Seno S."/>
            <person name="Sessa L."/>
            <person name="Sheng Y."/>
            <person name="Shibata Y."/>
            <person name="Shimada H."/>
            <person name="Shimada K."/>
            <person name="Silva D."/>
            <person name="Sinclair B."/>
            <person name="Sperling S."/>
            <person name="Stupka E."/>
            <person name="Sugiura K."/>
            <person name="Sultana R."/>
            <person name="Takenaka Y."/>
            <person name="Taki K."/>
            <person name="Tammoja K."/>
            <person name="Tan S.L."/>
            <person name="Tang S."/>
            <person name="Taylor M.S."/>
            <person name="Tegner J."/>
            <person name="Teichmann S.A."/>
            <person name="Ueda H.R."/>
            <person name="van Nimwegen E."/>
            <person name="Verardo R."/>
            <person name="Wei C.L."/>
            <person name="Yagi K."/>
            <person name="Yamanishi H."/>
            <person name="Zabarovsky E."/>
            <person name="Zhu S."/>
            <person name="Zimmer A."/>
            <person name="Hide W."/>
            <person name="Bult C."/>
            <person name="Grimmond S.M."/>
            <person name="Teasdale R.D."/>
            <person name="Liu E.T."/>
            <person name="Brusic V."/>
            <person name="Quackenbush J."/>
            <person name="Wahlestedt C."/>
            <person name="Mattick J.S."/>
            <person name="Hume D.A."/>
            <person name="Kai C."/>
            <person name="Sasaki D."/>
            <person name="Tomaru Y."/>
            <person name="Fukuda S."/>
            <person name="Kanamori-Katayama M."/>
            <person name="Suzuki M."/>
            <person name="Aoki J."/>
            <person name="Arakawa T."/>
            <person name="Iida J."/>
            <person name="Imamura K."/>
            <person name="Itoh M."/>
            <person name="Kato T."/>
            <person name="Kawaji H."/>
            <person name="Kawagashira N."/>
            <person name="Kawashima T."/>
            <person name="Kojima M."/>
            <person name="Kondo S."/>
            <person name="Konno H."/>
            <person name="Nakano K."/>
            <person name="Ninomiya N."/>
            <person name="Nishio T."/>
            <person name="Okada M."/>
            <person name="Plessy C."/>
            <person name="Shibata K."/>
            <person name="Shiraki T."/>
            <person name="Suzuki S."/>
            <person name="Tagami M."/>
            <person name="Waki K."/>
            <person name="Watahiki A."/>
            <person name="Okamura-Oho Y."/>
            <person name="Suzuki H."/>
            <person name="Kawai J."/>
            <person name="Hayashizaki Y."/>
        </authorList>
    </citation>
    <scope>NUCLEOTIDE SEQUENCE [LARGE SCALE MRNA] (ISOFORMS 1 AND 2)</scope>
    <source>
        <strain>C57BL/6J</strain>
        <tissue>Testis</tissue>
    </source>
</reference>
<reference key="2">
    <citation type="journal article" date="2004" name="Genome Res.">
        <title>The status, quality, and expansion of the NIH full-length cDNA project: the Mammalian Gene Collection (MGC).</title>
        <authorList>
            <consortium name="The MGC Project Team"/>
        </authorList>
    </citation>
    <scope>NUCLEOTIDE SEQUENCE [LARGE SCALE MRNA] (ISOFORM 3)</scope>
    <source>
        <strain>FVB/N</strain>
    </source>
</reference>
<reference key="3">
    <citation type="submission" date="2002-10" db="EMBL/GenBank/DDBJ databases">
        <title>Genomic sequence analysis in the mouse T-complex region.</title>
        <authorList>
            <person name="Brathwaite M.E."/>
            <person name="Waeltz P."/>
            <person name="Qian Y."/>
            <person name="Dudekula D."/>
            <person name="Schlessinger D."/>
            <person name="Nagaraja R."/>
        </authorList>
    </citation>
    <scope>NUCLEOTIDE SEQUENCE [LARGE SCALE GENOMIC DNA] OF 479-917</scope>
    <source>
        <strain>129S6/SvEvTac</strain>
    </source>
</reference>
<reference key="4">
    <citation type="journal article" date="2007" name="Proc. Natl. Acad. Sci. U.S.A.">
        <title>Large-scale phosphorylation analysis of mouse liver.</title>
        <authorList>
            <person name="Villen J."/>
            <person name="Beausoleil S.A."/>
            <person name="Gerber S.A."/>
            <person name="Gygi S.P."/>
        </authorList>
    </citation>
    <scope>PHOSPHORYLATION [LARGE SCALE ANALYSIS] AT THR-280 AND SER-283</scope>
    <scope>IDENTIFICATION BY MASS SPECTROMETRY [LARGE SCALE ANALYSIS]</scope>
    <source>
        <tissue>Liver</tissue>
    </source>
</reference>
<reference key="5">
    <citation type="journal article" date="2007" name="Science">
        <title>ATM and ATR substrate analysis reveals extensive protein networks responsive to DNA damage.</title>
        <authorList>
            <person name="Matsuoka S."/>
            <person name="Ballif B.A."/>
            <person name="Smogorzewska A."/>
            <person name="McDonald E.R. III"/>
            <person name="Hurov K.E."/>
            <person name="Luo J."/>
            <person name="Bakalarski C.E."/>
            <person name="Zhao Z."/>
            <person name="Solimini N."/>
            <person name="Lerenthal Y."/>
            <person name="Shiloh Y."/>
            <person name="Gygi S.P."/>
            <person name="Elledge S.J."/>
        </authorList>
    </citation>
    <scope>PHOSPHORYLATION [LARGE SCALE ANALYSIS] AT THR-280 AND SER-283</scope>
    <scope>IDENTIFICATION BY MASS SPECTROMETRY [LARGE SCALE ANALYSIS]</scope>
    <source>
        <tissue>Embryonic fibroblast</tissue>
    </source>
</reference>
<reference key="6">
    <citation type="journal article" date="2010" name="Cell">
        <title>A tissue-specific atlas of mouse protein phosphorylation and expression.</title>
        <authorList>
            <person name="Huttlin E.L."/>
            <person name="Jedrychowski M.P."/>
            <person name="Elias J.E."/>
            <person name="Goswami T."/>
            <person name="Rad R."/>
            <person name="Beausoleil S.A."/>
            <person name="Villen J."/>
            <person name="Haas W."/>
            <person name="Sowa M.E."/>
            <person name="Gygi S.P."/>
        </authorList>
    </citation>
    <scope>PHOSPHORYLATION [LARGE SCALE ANALYSIS] AT THR-280; SER-283; SER-774 AND SER-775</scope>
    <scope>IDENTIFICATION BY MASS SPECTROMETRY [LARGE SCALE ANALYSIS]</scope>
    <source>
        <tissue>Brain</tissue>
        <tissue>Brown adipose tissue</tissue>
        <tissue>Heart</tissue>
        <tissue>Kidney</tissue>
        <tissue>Liver</tissue>
        <tissue>Lung</tissue>
        <tissue>Pancreas</tissue>
        <tissue>Spleen</tissue>
        <tissue>Testis</tissue>
    </source>
</reference>
<reference key="7">
    <citation type="journal article" date="2012" name="J. Biol. Chem.">
        <title>Phf14, a novel regulator of mesenchyme growth via platelet-derived growth factor (PDGF) receptor-alpha.</title>
        <authorList>
            <person name="Kitagawa M."/>
            <person name="Takebe A."/>
            <person name="Ono Y."/>
            <person name="Imai T."/>
            <person name="Nakao K."/>
            <person name="Nishikawa S."/>
            <person name="Era T."/>
        </authorList>
    </citation>
    <scope>FUNCTION</scope>
    <scope>SUBCELLULAR LOCATION</scope>
    <scope>TISSUE SPECIFICITY</scope>
    <scope>DEVELOPMENTAL STAGE</scope>
    <scope>DISRUPTION PHENOTYPE</scope>
</reference>
<reference key="8">
    <citation type="journal article" date="2013" name="Acta Biochim. Biophys. Sin.">
        <title>Depletion of PHF14, a novel histone-binding protein gene, causes neonatal lethality in mice due to respiratory failure.</title>
        <authorList>
            <person name="Huang Q."/>
            <person name="Zhang L."/>
            <person name="Wang Y."/>
            <person name="Zhang C."/>
            <person name="Zhou S."/>
            <person name="Yang G."/>
            <person name="Li Z."/>
            <person name="Gao X."/>
            <person name="Chen Z."/>
            <person name="Zhang Z."/>
        </authorList>
    </citation>
    <scope>TISSUE SPECIFICITY</scope>
    <scope>DISRUPTION PHENOTYPE</scope>
</reference>
<reference key="9">
    <citation type="journal article" date="2020" name="Cell. Immunol.">
        <title>PHF14 is required for germinal center B cell development.</title>
        <authorList>
            <person name="Zhang L."/>
            <person name="Lu Y."/>
            <person name="Wang Y."/>
            <person name="Wang F."/>
            <person name="Zhai S."/>
            <person name="Chen Z."/>
            <person name="Cai Z."/>
        </authorList>
    </citation>
    <scope>FUNCTION</scope>
    <scope>DISRUPTION PHENOTYPE</scope>
</reference>
<evidence type="ECO:0000250" key="1">
    <source>
        <dbReference type="UniProtKB" id="A0A286Y9D1"/>
    </source>
</evidence>
<evidence type="ECO:0000250" key="2">
    <source>
        <dbReference type="UniProtKB" id="O94880"/>
    </source>
</evidence>
<evidence type="ECO:0000255" key="3"/>
<evidence type="ECO:0000255" key="4">
    <source>
        <dbReference type="PROSITE-ProRule" id="PRU00146"/>
    </source>
</evidence>
<evidence type="ECO:0000255" key="5">
    <source>
        <dbReference type="PROSITE-ProRule" id="PRU01146"/>
    </source>
</evidence>
<evidence type="ECO:0000256" key="6">
    <source>
        <dbReference type="SAM" id="MobiDB-lite"/>
    </source>
</evidence>
<evidence type="ECO:0000269" key="7">
    <source>
    </source>
</evidence>
<evidence type="ECO:0000269" key="8">
    <source>
    </source>
</evidence>
<evidence type="ECO:0000269" key="9">
    <source>
    </source>
</evidence>
<evidence type="ECO:0000305" key="10"/>
<evidence type="ECO:0007744" key="11">
    <source>
    </source>
</evidence>
<evidence type="ECO:0007744" key="12">
    <source>
    </source>
</evidence>
<evidence type="ECO:0007744" key="13">
    <source>
    </source>
</evidence>
<gene>
    <name type="primary">Phf14</name>
</gene>
<accession>Q9D4H9</accession>
<accession>Q810Z6</accession>
<accession>Q8C284</accession>
<accession>Q8CGF8</accession>
<accession>Q9D1Q8</accession>
<comment type="function">
    <text evidence="1 7 9">Histone-binding protein (By similarity). Binds preferentially to unmodified histone H3 but can also bind to a lesser extent to histone H3 trimethylated at 'Lys-9' (H3K9me3) as well as to histone H3 monomethylated at 'Lys-27' (H3K27ac) and trimethylated at 'Lys-27' (H3K27me3) (By similarity). Represses PDGFRA expression, thus playing a role in regulation of mesenchymal cell proliferation (PubMed:22730381). Suppresses the expression of CDKN1A/p21 by reducing the level of trimethylation of histone H3 'Lys-4', leading to enhanced proliferation of germinal center B cells (PubMed:33035772).</text>
</comment>
<comment type="subcellular location">
    <molecule>Isoform 1</molecule>
    <subcellularLocation>
        <location evidence="7">Nucleus</location>
    </subcellularLocation>
    <subcellularLocation>
        <location evidence="2">Chromosome</location>
    </subcellularLocation>
    <text evidence="2">Mainly localized in the nucleus of interphase cells. In mitotic cells, colocalizes with condensed chromatin during metaphase and anaphase.</text>
</comment>
<comment type="subcellular location">
    <molecule>Isoform 2</molecule>
    <subcellularLocation>
        <location evidence="2">Cytoplasm</location>
    </subcellularLocation>
</comment>
<comment type="alternative products">
    <event type="alternative splicing"/>
    <isoform>
        <id>Q9D4H9-2</id>
        <name>1</name>
        <sequence type="displayed"/>
    </isoform>
    <isoform>
        <id>Q9D4H9-1</id>
        <name>2</name>
        <sequence type="described" ref="VSP_061649 VSP_061650"/>
    </isoform>
    <isoform>
        <id>Q9D4H9-3</id>
        <name>3</name>
        <sequence type="described" ref="VSP_061648"/>
    </isoform>
</comment>
<comment type="tissue specificity">
    <text evidence="7 8">High levels detected in testis, lung and spleen and low levels in muscle, heart, intestine and kidney (at protein level) (PubMed:23688586). Widely expressed in adult with increased levels in intestine, colon and lung (PubMed:22730381).</text>
</comment>
<comment type="developmental stage">
    <text evidence="7">Expressed throughout embryogenesis and in the adult.</text>
</comment>
<comment type="domain">
    <text evidence="1">The N-terminal region, including the PHD-type 1 and 2 zinc fingers and the C2HC pre-PHD-type zinc finger, is required for binding to histone H3.</text>
</comment>
<comment type="disruption phenotype">
    <text evidence="7 8 9">Death just after birth due to respiratory failure with lungs showing interstitial hyperplasia (PubMed:22730381, PubMed:23688586). Abnormalities are also observed in other organs such as kidney and lung (PubMed:23688586). Mesenchymal fibroblasts exhibit increased proliferation and increased PDGFRA expression (PubMed:22730381). Conditional knockout in germinal center (GC) B cells results in reduced GC response in the spleen following immune challenge, with fewer and smaller GCs observed (PubMed:33035772).</text>
</comment>
<comment type="sequence caution" evidence="10">
    <conflict type="erroneous gene model prediction">
        <sequence resource="EMBL-CDS" id="AAO17166"/>
    </conflict>
</comment>
<comment type="sequence caution" evidence="10">
    <conflict type="erroneous initiation">
        <sequence resource="EMBL-CDS" id="BAB22644"/>
    </conflict>
    <text>Truncated N-terminus.</text>
</comment>
<keyword id="KW-0025">Alternative splicing</keyword>
<keyword id="KW-0158">Chromosome</keyword>
<keyword id="KW-0175">Coiled coil</keyword>
<keyword id="KW-0963">Cytoplasm</keyword>
<keyword id="KW-0479">Metal-binding</keyword>
<keyword id="KW-0539">Nucleus</keyword>
<keyword id="KW-0597">Phosphoprotein</keyword>
<keyword id="KW-1185">Reference proteome</keyword>
<keyword id="KW-0677">Repeat</keyword>
<keyword id="KW-0678">Repressor</keyword>
<keyword id="KW-0804">Transcription</keyword>
<keyword id="KW-0805">Transcription regulation</keyword>
<keyword id="KW-0862">Zinc</keyword>
<keyword id="KW-0863">Zinc-finger</keyword>
<dbReference type="EMBL" id="AK003209">
    <property type="protein sequence ID" value="BAB22644.1"/>
    <property type="status" value="ALT_INIT"/>
    <property type="molecule type" value="mRNA"/>
</dbReference>
<dbReference type="EMBL" id="AK016517">
    <property type="protein sequence ID" value="BAB30282.1"/>
    <property type="molecule type" value="mRNA"/>
</dbReference>
<dbReference type="EMBL" id="AK089073">
    <property type="protein sequence ID" value="BAC40735.1"/>
    <property type="molecule type" value="mRNA"/>
</dbReference>
<dbReference type="EMBL" id="BC040236">
    <property type="protein sequence ID" value="AAH40236.1"/>
    <property type="molecule type" value="mRNA"/>
</dbReference>
<dbReference type="EMBL" id="AY162410">
    <property type="protein sequence ID" value="AAO17166.1"/>
    <property type="status" value="ALT_SEQ"/>
    <property type="molecule type" value="Genomic_DNA"/>
</dbReference>
<dbReference type="CCDS" id="CCDS39428.1">
    <molecule id="Q9D4H9-1"/>
</dbReference>
<dbReference type="CCDS" id="CCDS51720.1">
    <molecule id="Q9D4H9-2"/>
</dbReference>
<dbReference type="RefSeq" id="NP_001161854.1">
    <molecule id="Q9D4H9-2"/>
    <property type="nucleotide sequence ID" value="NM_001168382.2"/>
</dbReference>
<dbReference type="RefSeq" id="NP_083680.2">
    <property type="nucleotide sequence ID" value="NM_029404.3"/>
</dbReference>
<dbReference type="RefSeq" id="XP_030111516.1">
    <molecule id="Q9D4H9-2"/>
    <property type="nucleotide sequence ID" value="XM_030255656.2"/>
</dbReference>
<dbReference type="SMR" id="Q9D4H9"/>
<dbReference type="BioGRID" id="217694">
    <property type="interactions" value="13"/>
</dbReference>
<dbReference type="FunCoup" id="Q9D4H9">
    <property type="interactions" value="4754"/>
</dbReference>
<dbReference type="STRING" id="10090.ENSMUSP00000111173"/>
<dbReference type="GlyGen" id="Q9D4H9">
    <property type="glycosylation" value="2 sites, 1 N-linked glycan (1 site)"/>
</dbReference>
<dbReference type="iPTMnet" id="Q9D4H9"/>
<dbReference type="PhosphoSitePlus" id="Q9D4H9"/>
<dbReference type="jPOST" id="Q9D4H9"/>
<dbReference type="PaxDb" id="10090-ENSMUSP00000111172"/>
<dbReference type="PeptideAtlas" id="Q9D4H9"/>
<dbReference type="ProteomicsDB" id="288192">
    <molecule id="Q9D4H9-1"/>
</dbReference>
<dbReference type="ProteomicsDB" id="288193">
    <molecule id="Q9D4H9-2"/>
</dbReference>
<dbReference type="ProteomicsDB" id="288194">
    <molecule id="Q9D4H9-3"/>
</dbReference>
<dbReference type="Pumba" id="Q9D4H9"/>
<dbReference type="Antibodypedia" id="629">
    <property type="antibodies" value="88 antibodies from 24 providers"/>
</dbReference>
<dbReference type="DNASU" id="75725"/>
<dbReference type="Ensembl" id="ENSMUST00000090632.11">
    <molecule id="Q9D4H9-3"/>
    <property type="protein sequence ID" value="ENSMUSP00000088126.5"/>
    <property type="gene ID" value="ENSMUSG00000029629.18"/>
</dbReference>
<dbReference type="Ensembl" id="ENSMUST00000115511.9">
    <molecule id="Q9D4H9-2"/>
    <property type="protein sequence ID" value="ENSMUSP00000111173.3"/>
    <property type="gene ID" value="ENSMUSG00000029629.18"/>
</dbReference>
<dbReference type="GeneID" id="75725"/>
<dbReference type="KEGG" id="mmu:75725"/>
<dbReference type="UCSC" id="uc009ayf.1">
    <molecule id="Q9D4H9-2"/>
    <property type="organism name" value="mouse"/>
</dbReference>
<dbReference type="UCSC" id="uc009ayg.2">
    <molecule id="Q9D4H9-2"/>
    <property type="organism name" value="mouse"/>
</dbReference>
<dbReference type="AGR" id="MGI:1923539"/>
<dbReference type="CTD" id="9678"/>
<dbReference type="MGI" id="MGI:1923539">
    <property type="gene designation" value="Phf14"/>
</dbReference>
<dbReference type="VEuPathDB" id="HostDB:ENSMUSG00000029629"/>
<dbReference type="eggNOG" id="KOG0957">
    <property type="taxonomic scope" value="Eukaryota"/>
</dbReference>
<dbReference type="GeneTree" id="ENSGT00940000156923"/>
<dbReference type="HOGENOM" id="CLU_006506_0_0_1"/>
<dbReference type="InParanoid" id="Q9D4H9"/>
<dbReference type="OMA" id="KCGVAVH"/>
<dbReference type="OrthoDB" id="336088at2759"/>
<dbReference type="PhylomeDB" id="Q9D4H9"/>
<dbReference type="BioGRID-ORCS" id="75725">
    <property type="hits" value="5 hits in 66 CRISPR screens"/>
</dbReference>
<dbReference type="ChiTaRS" id="Phf14">
    <property type="organism name" value="mouse"/>
</dbReference>
<dbReference type="PRO" id="PR:Q9D4H9"/>
<dbReference type="Proteomes" id="UP000000589">
    <property type="component" value="Chromosome 6"/>
</dbReference>
<dbReference type="RNAct" id="Q9D4H9">
    <property type="molecule type" value="protein"/>
</dbReference>
<dbReference type="Bgee" id="ENSMUSG00000029629">
    <property type="expression patterns" value="Expressed in manus and 255 other cell types or tissues"/>
</dbReference>
<dbReference type="ExpressionAtlas" id="Q9D4H9">
    <property type="expression patterns" value="baseline and differential"/>
</dbReference>
<dbReference type="GO" id="GO:0005694">
    <property type="term" value="C:chromosome"/>
    <property type="evidence" value="ECO:0007669"/>
    <property type="project" value="UniProtKB-SubCell"/>
</dbReference>
<dbReference type="GO" id="GO:0005737">
    <property type="term" value="C:cytoplasm"/>
    <property type="evidence" value="ECO:0007669"/>
    <property type="project" value="UniProtKB-SubCell"/>
</dbReference>
<dbReference type="GO" id="GO:0005634">
    <property type="term" value="C:nucleus"/>
    <property type="evidence" value="ECO:0000314"/>
    <property type="project" value="MGI"/>
</dbReference>
<dbReference type="GO" id="GO:0042393">
    <property type="term" value="F:histone binding"/>
    <property type="evidence" value="ECO:0000250"/>
    <property type="project" value="UniProtKB"/>
</dbReference>
<dbReference type="GO" id="GO:0140566">
    <property type="term" value="F:histone reader activity"/>
    <property type="evidence" value="ECO:0000250"/>
    <property type="project" value="UniProtKB"/>
</dbReference>
<dbReference type="GO" id="GO:0008270">
    <property type="term" value="F:zinc ion binding"/>
    <property type="evidence" value="ECO:0000250"/>
    <property type="project" value="UniProtKB"/>
</dbReference>
<dbReference type="GO" id="GO:0002314">
    <property type="term" value="P:germinal center B cell differentiation"/>
    <property type="evidence" value="ECO:0000315"/>
    <property type="project" value="UniProtKB"/>
</dbReference>
<dbReference type="GO" id="GO:0048286">
    <property type="term" value="P:lung alveolus development"/>
    <property type="evidence" value="ECO:0000315"/>
    <property type="project" value="MGI"/>
</dbReference>
<dbReference type="GO" id="GO:0010463">
    <property type="term" value="P:mesenchymal cell proliferation"/>
    <property type="evidence" value="ECO:0000315"/>
    <property type="project" value="MGI"/>
</dbReference>
<dbReference type="GO" id="GO:0060916">
    <property type="term" value="P:mesenchymal cell proliferation involved in lung development"/>
    <property type="evidence" value="ECO:0000315"/>
    <property type="project" value="MGI"/>
</dbReference>
<dbReference type="GO" id="GO:0008285">
    <property type="term" value="P:negative regulation of cell population proliferation"/>
    <property type="evidence" value="ECO:0000315"/>
    <property type="project" value="MGI"/>
</dbReference>
<dbReference type="GO" id="GO:0072201">
    <property type="term" value="P:negative regulation of mesenchymal cell proliferation"/>
    <property type="evidence" value="ECO:0000315"/>
    <property type="project" value="MGI"/>
</dbReference>
<dbReference type="GO" id="GO:2000791">
    <property type="term" value="P:negative regulation of mesenchymal cell proliferation involved in lung development"/>
    <property type="evidence" value="ECO:0000315"/>
    <property type="project" value="MGI"/>
</dbReference>
<dbReference type="GO" id="GO:2000584">
    <property type="term" value="P:negative regulation of platelet-derived growth factor receptor-alpha signaling pathway"/>
    <property type="evidence" value="ECO:0000315"/>
    <property type="project" value="MGI"/>
</dbReference>
<dbReference type="GO" id="GO:0000122">
    <property type="term" value="P:negative regulation of transcription by RNA polymerase II"/>
    <property type="evidence" value="ECO:0000314"/>
    <property type="project" value="MGI"/>
</dbReference>
<dbReference type="CDD" id="cd15674">
    <property type="entry name" value="ePHD_PHF14"/>
    <property type="match status" value="1"/>
</dbReference>
<dbReference type="CDD" id="cd15561">
    <property type="entry name" value="PHD1_PHF14"/>
    <property type="match status" value="1"/>
</dbReference>
<dbReference type="CDD" id="cd15562">
    <property type="entry name" value="PHD2_PHF14"/>
    <property type="match status" value="1"/>
</dbReference>
<dbReference type="CDD" id="cd15563">
    <property type="entry name" value="PHD3_PHF14"/>
    <property type="match status" value="1"/>
</dbReference>
<dbReference type="FunFam" id="2.30.30.1150:FF:000002">
    <property type="entry name" value="PHD finger protein 14 isoform X1"/>
    <property type="match status" value="1"/>
</dbReference>
<dbReference type="FunFam" id="3.30.40.10:FF:000059">
    <property type="entry name" value="PHD finger protein 14 isoform X1"/>
    <property type="match status" value="1"/>
</dbReference>
<dbReference type="FunFam" id="3.30.40.10:FF:000086">
    <property type="entry name" value="PHD finger protein 14 isoform X1"/>
    <property type="match status" value="1"/>
</dbReference>
<dbReference type="Gene3D" id="2.30.30.1150">
    <property type="match status" value="2"/>
</dbReference>
<dbReference type="Gene3D" id="3.30.40.10">
    <property type="entry name" value="Zinc/RING finger domain, C3HC4 (zinc finger)"/>
    <property type="match status" value="2"/>
</dbReference>
<dbReference type="InterPro" id="IPR034732">
    <property type="entry name" value="EPHD"/>
</dbReference>
<dbReference type="InterPro" id="IPR050701">
    <property type="entry name" value="Histone_Mod_Regulator"/>
</dbReference>
<dbReference type="InterPro" id="IPR019786">
    <property type="entry name" value="Zinc_finger_PHD-type_CS"/>
</dbReference>
<dbReference type="InterPro" id="IPR011011">
    <property type="entry name" value="Znf_FYVE_PHD"/>
</dbReference>
<dbReference type="InterPro" id="IPR001965">
    <property type="entry name" value="Znf_PHD"/>
</dbReference>
<dbReference type="InterPro" id="IPR019787">
    <property type="entry name" value="Znf_PHD-finger"/>
</dbReference>
<dbReference type="InterPro" id="IPR013083">
    <property type="entry name" value="Znf_RING/FYVE/PHD"/>
</dbReference>
<dbReference type="PANTHER" id="PTHR13793:SF150">
    <property type="entry name" value="PHD FINGER PROTEIN 14"/>
    <property type="match status" value="1"/>
</dbReference>
<dbReference type="PANTHER" id="PTHR13793">
    <property type="entry name" value="PHD FINGER PROTEINS"/>
    <property type="match status" value="1"/>
</dbReference>
<dbReference type="Pfam" id="PF00628">
    <property type="entry name" value="PHD"/>
    <property type="match status" value="2"/>
</dbReference>
<dbReference type="Pfam" id="PF13831">
    <property type="entry name" value="PHD_2"/>
    <property type="match status" value="1"/>
</dbReference>
<dbReference type="Pfam" id="PF13832">
    <property type="entry name" value="zf-HC5HC2H_2"/>
    <property type="match status" value="1"/>
</dbReference>
<dbReference type="SMART" id="SM00249">
    <property type="entry name" value="PHD"/>
    <property type="match status" value="4"/>
</dbReference>
<dbReference type="SUPFAM" id="SSF57903">
    <property type="entry name" value="FYVE/PHD zinc finger"/>
    <property type="match status" value="3"/>
</dbReference>
<dbReference type="PROSITE" id="PS51805">
    <property type="entry name" value="EPHD"/>
    <property type="match status" value="1"/>
</dbReference>
<dbReference type="PROSITE" id="PS01359">
    <property type="entry name" value="ZF_PHD_1"/>
    <property type="match status" value="3"/>
</dbReference>
<dbReference type="PROSITE" id="PS50016">
    <property type="entry name" value="ZF_PHD_2"/>
    <property type="match status" value="3"/>
</dbReference>